<feature type="chain" id="PRO_0000281077" description="Protein ABHD13">
    <location>
        <begin position="1"/>
        <end position="337"/>
    </location>
</feature>
<feature type="transmembrane region" description="Helical; Signal-anchor for type II membrane protein" evidence="2">
    <location>
        <begin position="37"/>
        <end position="57"/>
    </location>
</feature>
<feature type="active site" description="Charge relay system" evidence="1">
    <location>
        <position position="193"/>
    </location>
</feature>
<feature type="active site" description="Charge relay system" evidence="1">
    <location>
        <position position="268"/>
    </location>
</feature>
<feature type="active site" description="Charge relay system" evidence="1">
    <location>
        <position position="298"/>
    </location>
</feature>
<feature type="glycosylation site" description="N-linked (GlcNAc...) asparagine" evidence="2">
    <location>
        <position position="299"/>
    </location>
</feature>
<sequence>MEKSWMLWSFIERWLLALASWSWALCRISLLPLIVTFHLYGGIVLLLLIFVSIAGILYKFQDVLLYFPEQPSSSRLYVPMPTGIPHENIFIRTKDGVRLNLILVRYTGDNSPYCPTIIYFHGNAGNIGHRLPNALLMLVNLRVNLVLVDYRGYGKSEGEASEEGLYLDSEAVLDYVMTRPDLDKTKVFLFGRSLGGAVAIHLASENSHRISAIMVENTFLSIPHMASTLFSFFPMRYLPLWCYKNKFLSYRKISQCRMPSLFISGLSDQLIPPVMMKQLYELSPSRTKRLAIFPDGTHNDTWQCQGYFTALEQFIKEVIKSHSPEDMTKTSSNVTII</sequence>
<proteinExistence type="evidence at transcript level"/>
<dbReference type="EC" id="3.-.-.-"/>
<dbReference type="EMBL" id="AK004375">
    <property type="protein sequence ID" value="BAB23280.2"/>
    <property type="molecule type" value="mRNA"/>
</dbReference>
<dbReference type="EMBL" id="AK044407">
    <property type="protein sequence ID" value="BAC31905.1"/>
    <property type="status" value="ALT_INIT"/>
    <property type="molecule type" value="mRNA"/>
</dbReference>
<dbReference type="EMBL" id="BC043690">
    <property type="protein sequence ID" value="AAH43690.1"/>
    <property type="molecule type" value="mRNA"/>
</dbReference>
<dbReference type="CCDS" id="CCDS40217.1"/>
<dbReference type="RefSeq" id="NP_001074588.1">
    <property type="nucleotide sequence ID" value="NM_001081119.1"/>
</dbReference>
<dbReference type="RefSeq" id="NP_081144.1">
    <property type="nucleotide sequence ID" value="NM_026868.1"/>
</dbReference>
<dbReference type="SMR" id="Q80UX8"/>
<dbReference type="BioGRID" id="213107">
    <property type="interactions" value="2"/>
</dbReference>
<dbReference type="FunCoup" id="Q80UX8">
    <property type="interactions" value="2259"/>
</dbReference>
<dbReference type="STRING" id="10090.ENSMUSP00000116130"/>
<dbReference type="ChEMBL" id="CHEMBL3259493"/>
<dbReference type="ESTHER" id="mouse-Q80UX8">
    <property type="family name" value="ABHD13-BEM46"/>
</dbReference>
<dbReference type="MEROPS" id="S09.051"/>
<dbReference type="GlyCosmos" id="Q80UX8">
    <property type="glycosylation" value="1 site, No reported glycans"/>
</dbReference>
<dbReference type="GlyGen" id="Q80UX8">
    <property type="glycosylation" value="1 site"/>
</dbReference>
<dbReference type="iPTMnet" id="Q80UX8"/>
<dbReference type="PhosphoSitePlus" id="Q80UX8"/>
<dbReference type="PaxDb" id="10090-ENSMUSP00000116130"/>
<dbReference type="PeptideAtlas" id="Q80UX8"/>
<dbReference type="ProteomicsDB" id="285748"/>
<dbReference type="Antibodypedia" id="25425">
    <property type="antibodies" value="109 antibodies from 20 providers"/>
</dbReference>
<dbReference type="DNASU" id="68904"/>
<dbReference type="Ensembl" id="ENSMUST00000048216.6">
    <property type="protein sequence ID" value="ENSMUSP00000036730.6"/>
    <property type="gene ID" value="ENSMUSG00000040396.13"/>
</dbReference>
<dbReference type="Ensembl" id="ENSMUST00000139793.8">
    <property type="protein sequence ID" value="ENSMUSP00000116130.2"/>
    <property type="gene ID" value="ENSMUSG00000040396.13"/>
</dbReference>
<dbReference type="GeneID" id="68904"/>
<dbReference type="KEGG" id="mmu:68904"/>
<dbReference type="UCSC" id="uc009kum.1">
    <property type="organism name" value="mouse"/>
</dbReference>
<dbReference type="AGR" id="MGI:1916154"/>
<dbReference type="CTD" id="84945"/>
<dbReference type="MGI" id="MGI:1916154">
    <property type="gene designation" value="Abhd13"/>
</dbReference>
<dbReference type="VEuPathDB" id="HostDB:ENSMUSG00000040396"/>
<dbReference type="eggNOG" id="KOG4391">
    <property type="taxonomic scope" value="Eukaryota"/>
</dbReference>
<dbReference type="GeneTree" id="ENSGT00940000158114"/>
<dbReference type="HOGENOM" id="CLU_029375_2_0_1"/>
<dbReference type="InParanoid" id="Q80UX8"/>
<dbReference type="OMA" id="QYWTSED"/>
<dbReference type="OrthoDB" id="10249433at2759"/>
<dbReference type="PhylomeDB" id="Q80UX8"/>
<dbReference type="TreeFam" id="TF315122"/>
<dbReference type="BioGRID-ORCS" id="68904">
    <property type="hits" value="4 hits in 76 CRISPR screens"/>
</dbReference>
<dbReference type="ChiTaRS" id="Abhd13">
    <property type="organism name" value="mouse"/>
</dbReference>
<dbReference type="PRO" id="PR:Q80UX8"/>
<dbReference type="Proteomes" id="UP000000589">
    <property type="component" value="Chromosome 8"/>
</dbReference>
<dbReference type="RNAct" id="Q80UX8">
    <property type="molecule type" value="protein"/>
</dbReference>
<dbReference type="Bgee" id="ENSMUSG00000040396">
    <property type="expression patterns" value="Expressed in ear vesicle and 225 other cell types or tissues"/>
</dbReference>
<dbReference type="GO" id="GO:0005737">
    <property type="term" value="C:cytoplasm"/>
    <property type="evidence" value="ECO:0000314"/>
    <property type="project" value="UniProtKB"/>
</dbReference>
<dbReference type="GO" id="GO:0032839">
    <property type="term" value="C:dendrite cytoplasm"/>
    <property type="evidence" value="ECO:0000314"/>
    <property type="project" value="UniProtKB"/>
</dbReference>
<dbReference type="GO" id="GO:0016020">
    <property type="term" value="C:membrane"/>
    <property type="evidence" value="ECO:0007669"/>
    <property type="project" value="UniProtKB-SubCell"/>
</dbReference>
<dbReference type="GO" id="GO:0008474">
    <property type="term" value="F:palmitoyl-(protein) hydrolase activity"/>
    <property type="evidence" value="ECO:0000314"/>
    <property type="project" value="UniProtKB"/>
</dbReference>
<dbReference type="GO" id="GO:0002084">
    <property type="term" value="P:protein depalmitoylation"/>
    <property type="evidence" value="ECO:0000314"/>
    <property type="project" value="UniProtKB"/>
</dbReference>
<dbReference type="FunFam" id="3.40.50.1820:FF:000058">
    <property type="entry name" value="Alpha/beta hydrolase domain-containing protein 13"/>
    <property type="match status" value="1"/>
</dbReference>
<dbReference type="Gene3D" id="3.40.50.1820">
    <property type="entry name" value="alpha/beta hydrolase"/>
    <property type="match status" value="1"/>
</dbReference>
<dbReference type="InterPro" id="IPR000073">
    <property type="entry name" value="AB_hydrolase_1"/>
</dbReference>
<dbReference type="InterPro" id="IPR029058">
    <property type="entry name" value="AB_hydrolase_fold"/>
</dbReference>
<dbReference type="PANTHER" id="PTHR12277">
    <property type="entry name" value="ALPHA/BETA HYDROLASE DOMAIN-CONTAINING PROTEIN"/>
    <property type="match status" value="1"/>
</dbReference>
<dbReference type="PANTHER" id="PTHR12277:SF81">
    <property type="entry name" value="PROTEIN ABHD13"/>
    <property type="match status" value="1"/>
</dbReference>
<dbReference type="Pfam" id="PF00561">
    <property type="entry name" value="Abhydrolase_1"/>
    <property type="match status" value="1"/>
</dbReference>
<dbReference type="SUPFAM" id="SSF53474">
    <property type="entry name" value="alpha/beta-Hydrolases"/>
    <property type="match status" value="1"/>
</dbReference>
<organism>
    <name type="scientific">Mus musculus</name>
    <name type="common">Mouse</name>
    <dbReference type="NCBI Taxonomy" id="10090"/>
    <lineage>
        <taxon>Eukaryota</taxon>
        <taxon>Metazoa</taxon>
        <taxon>Chordata</taxon>
        <taxon>Craniata</taxon>
        <taxon>Vertebrata</taxon>
        <taxon>Euteleostomi</taxon>
        <taxon>Mammalia</taxon>
        <taxon>Eutheria</taxon>
        <taxon>Euarchontoglires</taxon>
        <taxon>Glires</taxon>
        <taxon>Rodentia</taxon>
        <taxon>Myomorpha</taxon>
        <taxon>Muroidea</taxon>
        <taxon>Muridae</taxon>
        <taxon>Murinae</taxon>
        <taxon>Mus</taxon>
        <taxon>Mus</taxon>
    </lineage>
</organism>
<keyword id="KW-0325">Glycoprotein</keyword>
<keyword id="KW-0378">Hydrolase</keyword>
<keyword id="KW-0472">Membrane</keyword>
<keyword id="KW-1185">Reference proteome</keyword>
<keyword id="KW-0735">Signal-anchor</keyword>
<keyword id="KW-0812">Transmembrane</keyword>
<keyword id="KW-1133">Transmembrane helix</keyword>
<accession>Q80UX8</accession>
<accession>Q8BXS1</accession>
<accession>Q9D0V5</accession>
<name>ABHDD_MOUSE</name>
<protein>
    <recommendedName>
        <fullName evidence="3">Protein ABHD13</fullName>
        <ecNumber>3.-.-.-</ecNumber>
    </recommendedName>
    <alternativeName>
        <fullName evidence="3">Alpha/beta hydrolase domain-containing protein 13</fullName>
        <shortName evidence="4">Abhydrolase domain-containing protein 13</shortName>
    </alternativeName>
</protein>
<reference key="1">
    <citation type="journal article" date="2005" name="Science">
        <title>The transcriptional landscape of the mammalian genome.</title>
        <authorList>
            <person name="Carninci P."/>
            <person name="Kasukawa T."/>
            <person name="Katayama S."/>
            <person name="Gough J."/>
            <person name="Frith M.C."/>
            <person name="Maeda N."/>
            <person name="Oyama R."/>
            <person name="Ravasi T."/>
            <person name="Lenhard B."/>
            <person name="Wells C."/>
            <person name="Kodzius R."/>
            <person name="Shimokawa K."/>
            <person name="Bajic V.B."/>
            <person name="Brenner S.E."/>
            <person name="Batalov S."/>
            <person name="Forrest A.R."/>
            <person name="Zavolan M."/>
            <person name="Davis M.J."/>
            <person name="Wilming L.G."/>
            <person name="Aidinis V."/>
            <person name="Allen J.E."/>
            <person name="Ambesi-Impiombato A."/>
            <person name="Apweiler R."/>
            <person name="Aturaliya R.N."/>
            <person name="Bailey T.L."/>
            <person name="Bansal M."/>
            <person name="Baxter L."/>
            <person name="Beisel K.W."/>
            <person name="Bersano T."/>
            <person name="Bono H."/>
            <person name="Chalk A.M."/>
            <person name="Chiu K.P."/>
            <person name="Choudhary V."/>
            <person name="Christoffels A."/>
            <person name="Clutterbuck D.R."/>
            <person name="Crowe M.L."/>
            <person name="Dalla E."/>
            <person name="Dalrymple B.P."/>
            <person name="de Bono B."/>
            <person name="Della Gatta G."/>
            <person name="di Bernardo D."/>
            <person name="Down T."/>
            <person name="Engstrom P."/>
            <person name="Fagiolini M."/>
            <person name="Faulkner G."/>
            <person name="Fletcher C.F."/>
            <person name="Fukushima T."/>
            <person name="Furuno M."/>
            <person name="Futaki S."/>
            <person name="Gariboldi M."/>
            <person name="Georgii-Hemming P."/>
            <person name="Gingeras T.R."/>
            <person name="Gojobori T."/>
            <person name="Green R.E."/>
            <person name="Gustincich S."/>
            <person name="Harbers M."/>
            <person name="Hayashi Y."/>
            <person name="Hensch T.K."/>
            <person name="Hirokawa N."/>
            <person name="Hill D."/>
            <person name="Huminiecki L."/>
            <person name="Iacono M."/>
            <person name="Ikeo K."/>
            <person name="Iwama A."/>
            <person name="Ishikawa T."/>
            <person name="Jakt M."/>
            <person name="Kanapin A."/>
            <person name="Katoh M."/>
            <person name="Kawasawa Y."/>
            <person name="Kelso J."/>
            <person name="Kitamura H."/>
            <person name="Kitano H."/>
            <person name="Kollias G."/>
            <person name="Krishnan S.P."/>
            <person name="Kruger A."/>
            <person name="Kummerfeld S.K."/>
            <person name="Kurochkin I.V."/>
            <person name="Lareau L.F."/>
            <person name="Lazarevic D."/>
            <person name="Lipovich L."/>
            <person name="Liu J."/>
            <person name="Liuni S."/>
            <person name="McWilliam S."/>
            <person name="Madan Babu M."/>
            <person name="Madera M."/>
            <person name="Marchionni L."/>
            <person name="Matsuda H."/>
            <person name="Matsuzawa S."/>
            <person name="Miki H."/>
            <person name="Mignone F."/>
            <person name="Miyake S."/>
            <person name="Morris K."/>
            <person name="Mottagui-Tabar S."/>
            <person name="Mulder N."/>
            <person name="Nakano N."/>
            <person name="Nakauchi H."/>
            <person name="Ng P."/>
            <person name="Nilsson R."/>
            <person name="Nishiguchi S."/>
            <person name="Nishikawa S."/>
            <person name="Nori F."/>
            <person name="Ohara O."/>
            <person name="Okazaki Y."/>
            <person name="Orlando V."/>
            <person name="Pang K.C."/>
            <person name="Pavan W.J."/>
            <person name="Pavesi G."/>
            <person name="Pesole G."/>
            <person name="Petrovsky N."/>
            <person name="Piazza S."/>
            <person name="Reed J."/>
            <person name="Reid J.F."/>
            <person name="Ring B.Z."/>
            <person name="Ringwald M."/>
            <person name="Rost B."/>
            <person name="Ruan Y."/>
            <person name="Salzberg S.L."/>
            <person name="Sandelin A."/>
            <person name="Schneider C."/>
            <person name="Schoenbach C."/>
            <person name="Sekiguchi K."/>
            <person name="Semple C.A."/>
            <person name="Seno S."/>
            <person name="Sessa L."/>
            <person name="Sheng Y."/>
            <person name="Shibata Y."/>
            <person name="Shimada H."/>
            <person name="Shimada K."/>
            <person name="Silva D."/>
            <person name="Sinclair B."/>
            <person name="Sperling S."/>
            <person name="Stupka E."/>
            <person name="Sugiura K."/>
            <person name="Sultana R."/>
            <person name="Takenaka Y."/>
            <person name="Taki K."/>
            <person name="Tammoja K."/>
            <person name="Tan S.L."/>
            <person name="Tang S."/>
            <person name="Taylor M.S."/>
            <person name="Tegner J."/>
            <person name="Teichmann S.A."/>
            <person name="Ueda H.R."/>
            <person name="van Nimwegen E."/>
            <person name="Verardo R."/>
            <person name="Wei C.L."/>
            <person name="Yagi K."/>
            <person name="Yamanishi H."/>
            <person name="Zabarovsky E."/>
            <person name="Zhu S."/>
            <person name="Zimmer A."/>
            <person name="Hide W."/>
            <person name="Bult C."/>
            <person name="Grimmond S.M."/>
            <person name="Teasdale R.D."/>
            <person name="Liu E.T."/>
            <person name="Brusic V."/>
            <person name="Quackenbush J."/>
            <person name="Wahlestedt C."/>
            <person name="Mattick J.S."/>
            <person name="Hume D.A."/>
            <person name="Kai C."/>
            <person name="Sasaki D."/>
            <person name="Tomaru Y."/>
            <person name="Fukuda S."/>
            <person name="Kanamori-Katayama M."/>
            <person name="Suzuki M."/>
            <person name="Aoki J."/>
            <person name="Arakawa T."/>
            <person name="Iida J."/>
            <person name="Imamura K."/>
            <person name="Itoh M."/>
            <person name="Kato T."/>
            <person name="Kawaji H."/>
            <person name="Kawagashira N."/>
            <person name="Kawashima T."/>
            <person name="Kojima M."/>
            <person name="Kondo S."/>
            <person name="Konno H."/>
            <person name="Nakano K."/>
            <person name="Ninomiya N."/>
            <person name="Nishio T."/>
            <person name="Okada M."/>
            <person name="Plessy C."/>
            <person name="Shibata K."/>
            <person name="Shiraki T."/>
            <person name="Suzuki S."/>
            <person name="Tagami M."/>
            <person name="Waki K."/>
            <person name="Watahiki A."/>
            <person name="Okamura-Oho Y."/>
            <person name="Suzuki H."/>
            <person name="Kawai J."/>
            <person name="Hayashizaki Y."/>
        </authorList>
    </citation>
    <scope>NUCLEOTIDE SEQUENCE [LARGE SCALE MRNA]</scope>
    <source>
        <strain>C57BL/6J</strain>
        <tissue>Embryo</tissue>
        <tissue>Retina</tissue>
    </source>
</reference>
<reference key="2">
    <citation type="journal article" date="2004" name="Genome Res.">
        <title>The status, quality, and expansion of the NIH full-length cDNA project: the Mammalian Gene Collection (MGC).</title>
        <authorList>
            <consortium name="The MGC Project Team"/>
        </authorList>
    </citation>
    <scope>NUCLEOTIDE SEQUENCE [LARGE SCALE MRNA]</scope>
    <source>
        <tissue>Mammary tumor</tissue>
    </source>
</reference>
<comment type="subcellular location">
    <subcellularLocation>
        <location evidence="3">Membrane</location>
        <topology evidence="3">Single-pass type II membrane protein</topology>
    </subcellularLocation>
</comment>
<comment type="similarity">
    <text evidence="3">Belongs to the serine esterase family.</text>
</comment>
<comment type="sequence caution" evidence="3">
    <conflict type="erroneous initiation">
        <sequence resource="EMBL-CDS" id="BAC31905"/>
    </conflict>
</comment>
<evidence type="ECO:0000250" key="1"/>
<evidence type="ECO:0000255" key="2"/>
<evidence type="ECO:0000305" key="3"/>
<evidence type="ECO:0000312" key="4">
    <source>
        <dbReference type="MGI" id="MGI:1916154"/>
    </source>
</evidence>
<gene>
    <name evidence="4" type="primary">Abhd13</name>
</gene>